<accession>Q3SXR2</accession>
<accession>Q3SXR3</accession>
<accession>Q9H6K8</accession>
<dbReference type="EMBL" id="AK025826">
    <property type="protein sequence ID" value="BAB15249.1"/>
    <property type="molecule type" value="mRNA"/>
</dbReference>
<dbReference type="EMBL" id="BC104161">
    <property type="protein sequence ID" value="AAI04162.1"/>
    <property type="molecule type" value="mRNA"/>
</dbReference>
<dbReference type="EMBL" id="BC104162">
    <property type="protein sequence ID" value="AAI04163.1"/>
    <property type="molecule type" value="mRNA"/>
</dbReference>
<dbReference type="RefSeq" id="NP_079317.2">
    <property type="nucleotide sequence ID" value="NM_025041.2"/>
</dbReference>
<dbReference type="BioGRID" id="123117">
    <property type="interactions" value="26"/>
</dbReference>
<dbReference type="FunCoup" id="Q3SXR2">
    <property type="interactions" value="1"/>
</dbReference>
<dbReference type="IntAct" id="Q3SXR2">
    <property type="interactions" value="34"/>
</dbReference>
<dbReference type="STRING" id="9606.ENSP00000386219"/>
<dbReference type="BioMuta" id="C3orf36"/>
<dbReference type="DMDM" id="115503730"/>
<dbReference type="PaxDb" id="9606-ENSP00000386219"/>
<dbReference type="UCSC" id="uc003epz.2">
    <property type="organism name" value="human"/>
</dbReference>
<dbReference type="AGR" id="HGNC:26170"/>
<dbReference type="GeneCards" id="C3orf36"/>
<dbReference type="HGNC" id="HGNC:26170">
    <property type="gene designation" value="C3orf36"/>
</dbReference>
<dbReference type="neXtProt" id="NX_Q3SXR2"/>
<dbReference type="PharmGKB" id="PA142672397"/>
<dbReference type="eggNOG" id="ENOG502THCB">
    <property type="taxonomic scope" value="Eukaryota"/>
</dbReference>
<dbReference type="HOGENOM" id="CLU_1829885_0_0_1"/>
<dbReference type="InParanoid" id="Q3SXR2"/>
<dbReference type="PAN-GO" id="Q3SXR2">
    <property type="GO annotations" value="0 GO annotations based on evolutionary models"/>
</dbReference>
<dbReference type="PathwayCommons" id="Q3SXR2"/>
<dbReference type="SignaLink" id="Q3SXR2"/>
<dbReference type="BioGRID-ORCS" id="80111">
    <property type="hits" value="13 hits in 1039 CRISPR screens"/>
</dbReference>
<dbReference type="GenomeRNAi" id="80111"/>
<dbReference type="Pharos" id="Q3SXR2">
    <property type="development level" value="Tdark"/>
</dbReference>
<dbReference type="PRO" id="PR:Q3SXR2"/>
<dbReference type="Proteomes" id="UP000005640">
    <property type="component" value="Chromosome 3"/>
</dbReference>
<dbReference type="RNAct" id="Q3SXR2">
    <property type="molecule type" value="protein"/>
</dbReference>
<dbReference type="InterPro" id="IPR040620">
    <property type="entry name" value="DUF5560"/>
</dbReference>
<dbReference type="Pfam" id="PF17715">
    <property type="entry name" value="DUF5560"/>
    <property type="match status" value="1"/>
</dbReference>
<proteinExistence type="evidence at protein level"/>
<organism>
    <name type="scientific">Homo sapiens</name>
    <name type="common">Human</name>
    <dbReference type="NCBI Taxonomy" id="9606"/>
    <lineage>
        <taxon>Eukaryota</taxon>
        <taxon>Metazoa</taxon>
        <taxon>Chordata</taxon>
        <taxon>Craniata</taxon>
        <taxon>Vertebrata</taxon>
        <taxon>Euteleostomi</taxon>
        <taxon>Mammalia</taxon>
        <taxon>Eutheria</taxon>
        <taxon>Euarchontoglires</taxon>
        <taxon>Primates</taxon>
        <taxon>Haplorrhini</taxon>
        <taxon>Catarrhini</taxon>
        <taxon>Hominidae</taxon>
        <taxon>Homo</taxon>
    </lineage>
</organism>
<keyword id="KW-1185">Reference proteome</keyword>
<name>CC036_HUMAN</name>
<reference key="1">
    <citation type="journal article" date="2004" name="Nat. Genet.">
        <title>Complete sequencing and characterization of 21,243 full-length human cDNAs.</title>
        <authorList>
            <person name="Ota T."/>
            <person name="Suzuki Y."/>
            <person name="Nishikawa T."/>
            <person name="Otsuki T."/>
            <person name="Sugiyama T."/>
            <person name="Irie R."/>
            <person name="Wakamatsu A."/>
            <person name="Hayashi K."/>
            <person name="Sato H."/>
            <person name="Nagai K."/>
            <person name="Kimura K."/>
            <person name="Makita H."/>
            <person name="Sekine M."/>
            <person name="Obayashi M."/>
            <person name="Nishi T."/>
            <person name="Shibahara T."/>
            <person name="Tanaka T."/>
            <person name="Ishii S."/>
            <person name="Yamamoto J."/>
            <person name="Saito K."/>
            <person name="Kawai Y."/>
            <person name="Isono Y."/>
            <person name="Nakamura Y."/>
            <person name="Nagahari K."/>
            <person name="Murakami K."/>
            <person name="Yasuda T."/>
            <person name="Iwayanagi T."/>
            <person name="Wagatsuma M."/>
            <person name="Shiratori A."/>
            <person name="Sudo H."/>
            <person name="Hosoiri T."/>
            <person name="Kaku Y."/>
            <person name="Kodaira H."/>
            <person name="Kondo H."/>
            <person name="Sugawara M."/>
            <person name="Takahashi M."/>
            <person name="Kanda K."/>
            <person name="Yokoi T."/>
            <person name="Furuya T."/>
            <person name="Kikkawa E."/>
            <person name="Omura Y."/>
            <person name="Abe K."/>
            <person name="Kamihara K."/>
            <person name="Katsuta N."/>
            <person name="Sato K."/>
            <person name="Tanikawa M."/>
            <person name="Yamazaki M."/>
            <person name="Ninomiya K."/>
            <person name="Ishibashi T."/>
            <person name="Yamashita H."/>
            <person name="Murakawa K."/>
            <person name="Fujimori K."/>
            <person name="Tanai H."/>
            <person name="Kimata M."/>
            <person name="Watanabe M."/>
            <person name="Hiraoka S."/>
            <person name="Chiba Y."/>
            <person name="Ishida S."/>
            <person name="Ono Y."/>
            <person name="Takiguchi S."/>
            <person name="Watanabe S."/>
            <person name="Yosida M."/>
            <person name="Hotuta T."/>
            <person name="Kusano J."/>
            <person name="Kanehori K."/>
            <person name="Takahashi-Fujii A."/>
            <person name="Hara H."/>
            <person name="Tanase T.-O."/>
            <person name="Nomura Y."/>
            <person name="Togiya S."/>
            <person name="Komai F."/>
            <person name="Hara R."/>
            <person name="Takeuchi K."/>
            <person name="Arita M."/>
            <person name="Imose N."/>
            <person name="Musashino K."/>
            <person name="Yuuki H."/>
            <person name="Oshima A."/>
            <person name="Sasaki N."/>
            <person name="Aotsuka S."/>
            <person name="Yoshikawa Y."/>
            <person name="Matsunawa H."/>
            <person name="Ichihara T."/>
            <person name="Shiohata N."/>
            <person name="Sano S."/>
            <person name="Moriya S."/>
            <person name="Momiyama H."/>
            <person name="Satoh N."/>
            <person name="Takami S."/>
            <person name="Terashima Y."/>
            <person name="Suzuki O."/>
            <person name="Nakagawa S."/>
            <person name="Senoh A."/>
            <person name="Mizoguchi H."/>
            <person name="Goto Y."/>
            <person name="Shimizu F."/>
            <person name="Wakebe H."/>
            <person name="Hishigaki H."/>
            <person name="Watanabe T."/>
            <person name="Sugiyama A."/>
            <person name="Takemoto M."/>
            <person name="Kawakami B."/>
            <person name="Yamazaki M."/>
            <person name="Watanabe K."/>
            <person name="Kumagai A."/>
            <person name="Itakura S."/>
            <person name="Fukuzumi Y."/>
            <person name="Fujimori Y."/>
            <person name="Komiyama M."/>
            <person name="Tashiro H."/>
            <person name="Tanigami A."/>
            <person name="Fujiwara T."/>
            <person name="Ono T."/>
            <person name="Yamada K."/>
            <person name="Fujii Y."/>
            <person name="Ozaki K."/>
            <person name="Hirao M."/>
            <person name="Ohmori Y."/>
            <person name="Kawabata A."/>
            <person name="Hikiji T."/>
            <person name="Kobatake N."/>
            <person name="Inagaki H."/>
            <person name="Ikema Y."/>
            <person name="Okamoto S."/>
            <person name="Okitani R."/>
            <person name="Kawakami T."/>
            <person name="Noguchi S."/>
            <person name="Itoh T."/>
            <person name="Shigeta K."/>
            <person name="Senba T."/>
            <person name="Matsumura K."/>
            <person name="Nakajima Y."/>
            <person name="Mizuno T."/>
            <person name="Morinaga M."/>
            <person name="Sasaki M."/>
            <person name="Togashi T."/>
            <person name="Oyama M."/>
            <person name="Hata H."/>
            <person name="Watanabe M."/>
            <person name="Komatsu T."/>
            <person name="Mizushima-Sugano J."/>
            <person name="Satoh T."/>
            <person name="Shirai Y."/>
            <person name="Takahashi Y."/>
            <person name="Nakagawa K."/>
            <person name="Okumura K."/>
            <person name="Nagase T."/>
            <person name="Nomura N."/>
            <person name="Kikuchi H."/>
            <person name="Masuho Y."/>
            <person name="Yamashita R."/>
            <person name="Nakai K."/>
            <person name="Yada T."/>
            <person name="Nakamura Y."/>
            <person name="Ohara O."/>
            <person name="Isogai T."/>
            <person name="Sugano S."/>
        </authorList>
    </citation>
    <scope>NUCLEOTIDE SEQUENCE [LARGE SCALE MRNA]</scope>
</reference>
<reference key="2">
    <citation type="journal article" date="2004" name="Genome Res.">
        <title>The status, quality, and expansion of the NIH full-length cDNA project: the Mammalian Gene Collection (MGC).</title>
        <authorList>
            <consortium name="The MGC Project Team"/>
        </authorList>
    </citation>
    <scope>NUCLEOTIDE SEQUENCE [LARGE SCALE MRNA]</scope>
</reference>
<feature type="chain" id="PRO_0000251963" description="Uncharacterized protein C3orf36">
    <location>
        <begin position="1"/>
        <end position="165"/>
    </location>
</feature>
<feature type="region of interest" description="Disordered" evidence="1">
    <location>
        <begin position="68"/>
        <end position="107"/>
    </location>
</feature>
<feature type="compositionally biased region" description="Pro residues" evidence="1">
    <location>
        <begin position="94"/>
        <end position="107"/>
    </location>
</feature>
<feature type="sequence conflict" description="In Ref. 2; AAI04162." evidence="2" ref="2">
    <original>F</original>
    <variation>L</variation>
    <location>
        <position position="57"/>
    </location>
</feature>
<feature type="sequence conflict" description="In Ref. 1; BAB15249." evidence="2" ref="1">
    <original>H</original>
    <variation>R</variation>
    <location>
        <position position="78"/>
    </location>
</feature>
<protein>
    <recommendedName>
        <fullName>Uncharacterized protein C3orf36</fullName>
    </recommendedName>
</protein>
<comment type="interaction">
    <interactant intactId="EBI-18036948">
        <id>Q3SXR2</id>
    </interactant>
    <interactant intactId="EBI-11954519">
        <id>Q49AR9</id>
        <label>ANKS1A</label>
    </interactant>
    <organismsDiffer>false</organismsDiffer>
    <experiments>3</experiments>
</comment>
<comment type="interaction">
    <interactant intactId="EBI-18036948">
        <id>Q3SXR2</id>
    </interactant>
    <interactant intactId="EBI-11524452">
        <id>Q8N9N5-2</id>
        <label>BANP</label>
    </interactant>
    <organismsDiffer>false</organismsDiffer>
    <experiments>3</experiments>
</comment>
<comment type="interaction">
    <interactant intactId="EBI-18036948">
        <id>Q3SXR2</id>
    </interactant>
    <interactant intactId="EBI-718729">
        <id>P55212</id>
        <label>CASP6</label>
    </interactant>
    <organismsDiffer>false</organismsDiffer>
    <experiments>3</experiments>
</comment>
<comment type="interaction">
    <interactant intactId="EBI-18036948">
        <id>Q3SXR2</id>
    </interactant>
    <interactant intactId="EBI-745535">
        <id>Q8NI60</id>
        <label>COQ8A</label>
    </interactant>
    <organismsDiffer>false</organismsDiffer>
    <experiments>3</experiments>
</comment>
<comment type="interaction">
    <interactant intactId="EBI-18036948">
        <id>Q3SXR2</id>
    </interactant>
    <interactant intactId="EBI-446479">
        <id>P99999</id>
        <label>CYCS</label>
    </interactant>
    <organismsDiffer>false</organismsDiffer>
    <experiments>3</experiments>
</comment>
<comment type="interaction">
    <interactant intactId="EBI-18036948">
        <id>Q3SXR2</id>
    </interactant>
    <interactant intactId="EBI-348399">
        <id>P22607</id>
        <label>FGFR3</label>
    </interactant>
    <organismsDiffer>false</organismsDiffer>
    <experiments>3</experiments>
</comment>
<comment type="interaction">
    <interactant intactId="EBI-18036948">
        <id>Q3SXR2</id>
    </interactant>
    <interactant intactId="EBI-8285963">
        <id>Q14957</id>
        <label>GRIN2C</label>
    </interactant>
    <organismsDiffer>false</organismsDiffer>
    <experiments>3</experiments>
</comment>
<comment type="interaction">
    <interactant intactId="EBI-18036948">
        <id>Q3SXR2</id>
    </interactant>
    <interactant intactId="EBI-351506">
        <id>P06396</id>
        <label>GSN</label>
    </interactant>
    <organismsDiffer>false</organismsDiffer>
    <experiments>3</experiments>
</comment>
<comment type="interaction">
    <interactant intactId="EBI-18036948">
        <id>Q3SXR2</id>
    </interactant>
    <interactant intactId="EBI-12094670">
        <id>Q8WUI4-6</id>
        <label>HDAC7</label>
    </interactant>
    <organismsDiffer>false</organismsDiffer>
    <experiments>3</experiments>
</comment>
<comment type="interaction">
    <interactant intactId="EBI-18036948">
        <id>Q3SXR2</id>
    </interactant>
    <interactant intactId="EBI-740220">
        <id>O14964</id>
        <label>HGS</label>
    </interactant>
    <organismsDiffer>false</organismsDiffer>
    <experiments>3</experiments>
</comment>
<comment type="interaction">
    <interactant intactId="EBI-18036948">
        <id>Q3SXR2</id>
    </interactant>
    <interactant intactId="EBI-473886">
        <id>O00291</id>
        <label>HIP1</label>
    </interactant>
    <organismsDiffer>false</organismsDiffer>
    <experiments>3</experiments>
</comment>
<comment type="interaction">
    <interactant intactId="EBI-18036948">
        <id>Q3SXR2</id>
    </interactant>
    <interactant intactId="EBI-712096">
        <id>P30519</id>
        <label>HMOX2</label>
    </interactant>
    <organismsDiffer>false</organismsDiffer>
    <experiments>3</experiments>
</comment>
<comment type="interaction">
    <interactant intactId="EBI-18036948">
        <id>Q3SXR2</id>
    </interactant>
    <interactant intactId="EBI-21591415">
        <id>P13473-2</id>
        <label>LAMP2</label>
    </interactant>
    <organismsDiffer>false</organismsDiffer>
    <experiments>3</experiments>
</comment>
<comment type="interaction">
    <interactant intactId="EBI-18036948">
        <id>Q3SXR2</id>
    </interactant>
    <interactant intactId="EBI-307294">
        <id>Q13163</id>
        <label>MAP2K5</label>
    </interactant>
    <organismsDiffer>false</organismsDiffer>
    <experiments>3</experiments>
</comment>
<comment type="interaction">
    <interactant intactId="EBI-18036948">
        <id>Q3SXR2</id>
    </interactant>
    <interactant intactId="EBI-11742836">
        <id>Q16656-4</id>
        <label>NRF1</label>
    </interactant>
    <organismsDiffer>false</organismsDiffer>
    <experiments>3</experiments>
</comment>
<comment type="interaction">
    <interactant intactId="EBI-18036948">
        <id>Q3SXR2</id>
    </interactant>
    <interactant intactId="EBI-79893">
        <id>Q92569</id>
        <label>PIK3R3</label>
    </interactant>
    <organismsDiffer>false</organismsDiffer>
    <experiments>3</experiments>
</comment>
<comment type="interaction">
    <interactant intactId="EBI-18036948">
        <id>Q3SXR2</id>
    </interactant>
    <interactant intactId="EBI-714158">
        <id>Q13526</id>
        <label>PIN1</label>
    </interactant>
    <organismsDiffer>false</organismsDiffer>
    <experiments>3</experiments>
</comment>
<comment type="interaction">
    <interactant intactId="EBI-18036948">
        <id>Q3SXR2</id>
    </interactant>
    <interactant intactId="EBI-710402">
        <id>Q96I34</id>
        <label>PPP1R16A</label>
    </interactant>
    <organismsDiffer>false</organismsDiffer>
    <experiments>3</experiments>
</comment>
<comment type="interaction">
    <interactant intactId="EBI-18036948">
        <id>Q3SXR2</id>
    </interactant>
    <interactant intactId="EBI-712311">
        <id>P67775</id>
        <label>PPP2CA</label>
    </interactant>
    <organismsDiffer>false</organismsDiffer>
    <experiments>3</experiments>
</comment>
<comment type="interaction">
    <interactant intactId="EBI-18036948">
        <id>Q3SXR2</id>
    </interactant>
    <interactant intactId="EBI-1053424">
        <id>O43741</id>
        <label>PRKAB2</label>
    </interactant>
    <organismsDiffer>false</organismsDiffer>
    <experiments>3</experiments>
</comment>
<comment type="interaction">
    <interactant intactId="EBI-18036948">
        <id>Q3SXR2</id>
    </interactant>
    <interactant intactId="EBI-5280197">
        <id>O75400-2</id>
        <label>PRPF40A</label>
    </interactant>
    <organismsDiffer>false</organismsDiffer>
    <experiments>3</experiments>
</comment>
<comment type="interaction">
    <interactant intactId="EBI-18036948">
        <id>Q3SXR2</id>
    </interactant>
    <interactant intactId="EBI-12754095">
        <id>P86480</id>
        <label>PRR20D</label>
    </interactant>
    <organismsDiffer>false</organismsDiffer>
    <experiments>3</experiments>
</comment>
<comment type="interaction">
    <interactant intactId="EBI-18036948">
        <id>Q3SXR2</id>
    </interactant>
    <interactant intactId="EBI-286642">
        <id>P62826</id>
        <label>RAN</label>
    </interactant>
    <organismsDiffer>false</organismsDiffer>
    <experiments>3</experiments>
</comment>
<comment type="interaction">
    <interactant intactId="EBI-18036948">
        <id>Q3SXR2</id>
    </interactant>
    <interactant intactId="EBI-10246897">
        <id>Q5TAB7</id>
        <label>RIPPLY2</label>
    </interactant>
    <organismsDiffer>false</organismsDiffer>
    <experiments>3</experiments>
</comment>
<comment type="interaction">
    <interactant intactId="EBI-18036948">
        <id>Q3SXR2</id>
    </interactant>
    <interactant intactId="EBI-1054052">
        <id>P31948</id>
        <label>STIP1</label>
    </interactant>
    <organismsDiffer>false</organismsDiffer>
    <experiments>3</experiments>
</comment>
<comment type="interaction">
    <interactant intactId="EBI-18036948">
        <id>Q3SXR2</id>
    </interactant>
    <interactant intactId="EBI-752030">
        <id>Q96A09</id>
        <label>TENT5B</label>
    </interactant>
    <organismsDiffer>false</organismsDiffer>
    <experiments>3</experiments>
</comment>
<comment type="interaction">
    <interactant intactId="EBI-18036948">
        <id>Q3SXR2</id>
    </interactant>
    <interactant intactId="EBI-741480">
        <id>Q9UMX0</id>
        <label>UBQLN1</label>
    </interactant>
    <organismsDiffer>false</organismsDiffer>
    <experiments>3</experiments>
</comment>
<comment type="interaction">
    <interactant intactId="EBI-18036948">
        <id>Q3SXR2</id>
    </interactant>
    <interactant intactId="EBI-17208936">
        <id>P0CB47</id>
        <label>UBTFL1</label>
    </interactant>
    <organismsDiffer>false</organismsDiffer>
    <experiments>3</experiments>
</comment>
<comment type="interaction">
    <interactant intactId="EBI-18036948">
        <id>Q3SXR2</id>
    </interactant>
    <interactant intactId="EBI-7254550">
        <id>P36508</id>
        <label>ZNF76</label>
    </interactant>
    <organismsDiffer>false</organismsDiffer>
    <experiments>3</experiments>
</comment>
<comment type="interaction">
    <interactant intactId="EBI-18036948">
        <id>Q3SXR2</id>
    </interactant>
    <interactant intactId="EBI-25900580">
        <id>Q9Y649</id>
    </interactant>
    <organismsDiffer>false</organismsDiffer>
    <experiments>3</experiments>
</comment>
<evidence type="ECO:0000256" key="1">
    <source>
        <dbReference type="SAM" id="MobiDB-lite"/>
    </source>
</evidence>
<evidence type="ECO:0000305" key="2"/>
<gene>
    <name type="primary">C3orf36</name>
</gene>
<sequence>MQAETILEGLEAGLPQAVSSGLSLVPAPGLVLTCLSAPSGPGGMALEPPPTTLRKAFLAQSTLLESTLEGAPEWAAPHPEEQRRSPPACSQHTPPLPSTPTGPPPCSPGGNHPLCALSGRGGGRCSIPSLSSSSTFSLFSSGCWNPRVKLRVRKSQSQGRAGQLI</sequence>